<gene>
    <name type="ordered locus">BB_0381</name>
</gene>
<name>Y381_BORBU</name>
<accession>P94250</accession>
<accession>O50167</accession>
<comment type="subcellular location">
    <subcellularLocation>
        <location evidence="2">Membrane</location>
        <topology evidence="2">Single-pass membrane protein</topology>
    </subcellularLocation>
</comment>
<keyword id="KW-0472">Membrane</keyword>
<keyword id="KW-1185">Reference proteome</keyword>
<keyword id="KW-0812">Transmembrane</keyword>
<keyword id="KW-1133">Transmembrane helix</keyword>
<sequence length="474" mass="55673">MNKKMFPKIYYYDQDFIDIYNKSLSWIQDKVILQKVADRGKKDKNYYSENCDYIDQMQACMSSFFLVYSNGEYSSTSAIDKFYQLQEESGAIRARYDNNNAIIDLDENEENIGFPIFAWAEYNLYHKTGNKKRISEVLPILDKYYKWIESKFLKENGLYSIDVNKIFYKNSPRVDAYYPIDFNSLQVHNAYCISKLADILNDKNLSLEYKKRFFSLKVKINSLMWSEKDGFYYDLDVNENILEIKTIVGFFPMLSEIPSEDRIERMIFYLKSTNHFGTPNPFPTLSVSEPGFSEDGNGYYGSVYTYMNFFVIKGLEYCGRANIAREFTIRHLYYILDTLMPFNKIKGHIWEAYRPMQEGPAYFDSNKKTYTEKGLICYLALFSISLMIENIIGLTISLPDKTVYWNIPTLEIMGIESLSLKKNQTTIICNKGKRGWEIKMESEKLYYFTINILNKKEKTLPIPSGRCSMLLDKL</sequence>
<evidence type="ECO:0000255" key="1"/>
<evidence type="ECO:0000305" key="2"/>
<feature type="chain" id="PRO_0000174399" description="Uncharacterized protein BB_0381">
    <location>
        <begin position="1"/>
        <end position="474"/>
    </location>
</feature>
<feature type="transmembrane region" description="Helical" evidence="1">
    <location>
        <begin position="374"/>
        <end position="398"/>
    </location>
</feature>
<feature type="sequence conflict" description="In Ref. 1; AAC44714." evidence="2" ref="1">
    <original>L</original>
    <variation>F</variation>
    <location>
        <position position="33"/>
    </location>
</feature>
<feature type="sequence conflict" description="In Ref. 1; AAC44714." evidence="2" ref="1">
    <original>G</original>
    <variation>T</variation>
    <location>
        <position position="40"/>
    </location>
</feature>
<feature type="sequence conflict" description="In Ref. 1; AAC44714." evidence="2" ref="1">
    <original>E</original>
    <variation>D</variation>
    <location>
        <position position="107"/>
    </location>
</feature>
<feature type="sequence conflict" description="In Ref. 1; AAC44714." evidence="2" ref="1">
    <original>S</original>
    <variation>A</variation>
    <location>
        <position position="365"/>
    </location>
</feature>
<protein>
    <recommendedName>
        <fullName>Uncharacterized protein BB_0381</fullName>
    </recommendedName>
</protein>
<proteinExistence type="predicted"/>
<dbReference type="EMBL" id="U49938">
    <property type="protein sequence ID" value="AAC44714.1"/>
    <property type="molecule type" value="Genomic_DNA"/>
</dbReference>
<dbReference type="EMBL" id="AE000783">
    <property type="protein sequence ID" value="AAC66759.1"/>
    <property type="status" value="ALT_TERM"/>
    <property type="molecule type" value="Genomic_DNA"/>
</dbReference>
<dbReference type="PIR" id="D70147">
    <property type="entry name" value="D70147"/>
</dbReference>
<dbReference type="RefSeq" id="NP_212515.1">
    <property type="nucleotide sequence ID" value="NC_001318.1"/>
</dbReference>
<dbReference type="RefSeq" id="WP_010889739.1">
    <property type="nucleotide sequence ID" value="NC_001318.1"/>
</dbReference>
<dbReference type="SMR" id="P94250"/>
<dbReference type="STRING" id="224326.BB_0381"/>
<dbReference type="CAZy" id="GH63">
    <property type="family name" value="Glycoside Hydrolase Family 63"/>
</dbReference>
<dbReference type="PaxDb" id="224326-BB_0381"/>
<dbReference type="EnsemblBacteria" id="AAC66759">
    <property type="protein sequence ID" value="AAC66759"/>
    <property type="gene ID" value="BB_0381"/>
</dbReference>
<dbReference type="KEGG" id="bbu:BB_0381"/>
<dbReference type="PATRIC" id="fig|224326.49.peg.776"/>
<dbReference type="HOGENOM" id="CLU_025779_0_0_12"/>
<dbReference type="OrthoDB" id="9798687at2"/>
<dbReference type="Proteomes" id="UP000001807">
    <property type="component" value="Chromosome"/>
</dbReference>
<dbReference type="GO" id="GO:0016020">
    <property type="term" value="C:membrane"/>
    <property type="evidence" value="ECO:0007669"/>
    <property type="project" value="UniProtKB-SubCell"/>
</dbReference>
<dbReference type="GO" id="GO:0004555">
    <property type="term" value="F:alpha,alpha-trehalase activity"/>
    <property type="evidence" value="ECO:0007669"/>
    <property type="project" value="InterPro"/>
</dbReference>
<dbReference type="GO" id="GO:0005993">
    <property type="term" value="P:trehalose catabolic process"/>
    <property type="evidence" value="ECO:0007669"/>
    <property type="project" value="TreeGrafter"/>
</dbReference>
<dbReference type="Gene3D" id="1.50.10.10">
    <property type="match status" value="1"/>
</dbReference>
<dbReference type="InterPro" id="IPR008928">
    <property type="entry name" value="6-hairpin_glycosidase_sf"/>
</dbReference>
<dbReference type="InterPro" id="IPR012341">
    <property type="entry name" value="6hp_glycosidase-like_sf"/>
</dbReference>
<dbReference type="InterPro" id="IPR001661">
    <property type="entry name" value="Glyco_hydro_37"/>
</dbReference>
<dbReference type="InterPro" id="IPR054491">
    <property type="entry name" value="MGH1-like_GH"/>
</dbReference>
<dbReference type="PANTHER" id="PTHR23403">
    <property type="entry name" value="TREHALASE"/>
    <property type="match status" value="1"/>
</dbReference>
<dbReference type="PANTHER" id="PTHR23403:SF1">
    <property type="entry name" value="TREHALASE"/>
    <property type="match status" value="1"/>
</dbReference>
<dbReference type="Pfam" id="PF22422">
    <property type="entry name" value="MGH1-like_GH"/>
    <property type="match status" value="1"/>
</dbReference>
<dbReference type="SUPFAM" id="SSF48208">
    <property type="entry name" value="Six-hairpin glycosidases"/>
    <property type="match status" value="1"/>
</dbReference>
<organism>
    <name type="scientific">Borreliella burgdorferi (strain ATCC 35210 / DSM 4680 / CIP 102532 / B31)</name>
    <name type="common">Borrelia burgdorferi</name>
    <dbReference type="NCBI Taxonomy" id="224326"/>
    <lineage>
        <taxon>Bacteria</taxon>
        <taxon>Pseudomonadati</taxon>
        <taxon>Spirochaetota</taxon>
        <taxon>Spirochaetia</taxon>
        <taxon>Spirochaetales</taxon>
        <taxon>Borreliaceae</taxon>
        <taxon>Borreliella</taxon>
    </lineage>
</organism>
<reference key="1">
    <citation type="journal article" date="1996" name="FEMS Microbiol. Lett.">
        <title>Identification and mapping of a chromosomal gene cluster of Borrelia burgdorferi containing genes expressed in vivo.</title>
        <authorList>
            <person name="Aron L."/>
            <person name="Toth C."/>
            <person name="Godfrey H.P."/>
            <person name="Cabello F.C."/>
        </authorList>
    </citation>
    <scope>NUCLEOTIDE SEQUENCE [GENOMIC DNA]</scope>
    <source>
        <strain>ATCC 53899 / 297</strain>
    </source>
</reference>
<reference key="2">
    <citation type="journal article" date="1997" name="Nature">
        <title>Genomic sequence of a Lyme disease spirochaete, Borrelia burgdorferi.</title>
        <authorList>
            <person name="Fraser C.M."/>
            <person name="Casjens S."/>
            <person name="Huang W.M."/>
            <person name="Sutton G.G."/>
            <person name="Clayton R.A."/>
            <person name="Lathigra R."/>
            <person name="White O."/>
            <person name="Ketchum K.A."/>
            <person name="Dodson R.J."/>
            <person name="Hickey E.K."/>
            <person name="Gwinn M.L."/>
            <person name="Dougherty B.A."/>
            <person name="Tomb J.-F."/>
            <person name="Fleischmann R.D."/>
            <person name="Richardson D.L."/>
            <person name="Peterson J.D."/>
            <person name="Kerlavage A.R."/>
            <person name="Quackenbush J."/>
            <person name="Salzberg S.L."/>
            <person name="Hanson M."/>
            <person name="van Vugt R."/>
            <person name="Palmer N."/>
            <person name="Adams M.D."/>
            <person name="Gocayne J.D."/>
            <person name="Weidman J.F."/>
            <person name="Utterback T.R."/>
            <person name="Watthey L."/>
            <person name="McDonald L.A."/>
            <person name="Artiach P."/>
            <person name="Bowman C."/>
            <person name="Garland S.A."/>
            <person name="Fujii C."/>
            <person name="Cotton M.D."/>
            <person name="Horst K."/>
            <person name="Roberts K.M."/>
            <person name="Hatch B."/>
            <person name="Smith H.O."/>
            <person name="Venter J.C."/>
        </authorList>
    </citation>
    <scope>NUCLEOTIDE SEQUENCE [LARGE SCALE GENOMIC DNA]</scope>
    <source>
        <strain>ATCC 35210 / DSM 4680 / CIP 102532 / B31</strain>
    </source>
</reference>